<reference key="1">
    <citation type="journal article" date="2006" name="PLoS Genet.">
        <title>Genome sequence of Rickettsia bellii illuminates the role of amoebae in gene exchanges between intracellular pathogens.</title>
        <authorList>
            <person name="Ogata H."/>
            <person name="La Scola B."/>
            <person name="Audic S."/>
            <person name="Renesto P."/>
            <person name="Blanc G."/>
            <person name="Robert C."/>
            <person name="Fournier P.-E."/>
            <person name="Claverie J.-M."/>
            <person name="Raoult D."/>
        </authorList>
    </citation>
    <scope>NUCLEOTIDE SEQUENCE [LARGE SCALE GENOMIC DNA]</scope>
    <source>
        <strain>RML369-C</strain>
    </source>
</reference>
<proteinExistence type="inferred from homology"/>
<name>ATPG_RICBR</name>
<keyword id="KW-0066">ATP synthesis</keyword>
<keyword id="KW-0997">Cell inner membrane</keyword>
<keyword id="KW-1003">Cell membrane</keyword>
<keyword id="KW-0139">CF(1)</keyword>
<keyword id="KW-0375">Hydrogen ion transport</keyword>
<keyword id="KW-0406">Ion transport</keyword>
<keyword id="KW-0472">Membrane</keyword>
<keyword id="KW-0813">Transport</keyword>
<accession>Q1RKD8</accession>
<feature type="chain" id="PRO_0000277935" description="ATP synthase gamma chain">
    <location>
        <begin position="1"/>
        <end position="288"/>
    </location>
</feature>
<sequence>MSNLKQLRTRIKSVKSTQKITKAMQLVSASKLTKIKNQIAHSNFYVEAISKMMSTVLSADIYDFPIEAQKFFNTETNKANLLIVMTSERGLCGTFNYMIIKQVKSDVETLKSKGEKIKLIIIGKKGYEALKKPYESYIDSYFELPKNHDENLMLQIKQKIMALVANLEVSNCTIYFNRFKNAMTQSMTKQQILPIEKYHDDSKIEEANYEYEGENLIQNLINLYVNSQINYALLQNRASEEGSRMTAMENATNNAHDIINKLVLKLNRSRQAIITTELIEIIAGSEAV</sequence>
<comment type="function">
    <text evidence="1">Produces ATP from ADP in the presence of a proton gradient across the membrane. The gamma chain is believed to be important in regulating ATPase activity and the flow of protons through the CF(0) complex.</text>
</comment>
<comment type="subunit">
    <text evidence="1">F-type ATPases have 2 components, CF(1) - the catalytic core - and CF(0) - the membrane proton channel. CF(1) has five subunits: alpha(3), beta(3), gamma(1), delta(1), epsilon(1). CF(0) has three main subunits: a, b and c.</text>
</comment>
<comment type="subcellular location">
    <subcellularLocation>
        <location evidence="1">Cell inner membrane</location>
        <topology evidence="1">Peripheral membrane protein</topology>
    </subcellularLocation>
</comment>
<comment type="similarity">
    <text evidence="1">Belongs to the ATPase gamma chain family.</text>
</comment>
<protein>
    <recommendedName>
        <fullName evidence="1">ATP synthase gamma chain</fullName>
    </recommendedName>
    <alternativeName>
        <fullName evidence="1">ATP synthase F1 sector gamma subunit</fullName>
    </alternativeName>
    <alternativeName>
        <fullName evidence="1">F-ATPase gamma subunit</fullName>
    </alternativeName>
</protein>
<gene>
    <name evidence="1" type="primary">atpG</name>
    <name type="ordered locus">RBE_0095</name>
</gene>
<dbReference type="EMBL" id="CP000087">
    <property type="protein sequence ID" value="ABE04176.1"/>
    <property type="molecule type" value="Genomic_DNA"/>
</dbReference>
<dbReference type="RefSeq" id="WP_011476791.1">
    <property type="nucleotide sequence ID" value="NC_007940.1"/>
</dbReference>
<dbReference type="SMR" id="Q1RKD8"/>
<dbReference type="KEGG" id="rbe:RBE_0095"/>
<dbReference type="eggNOG" id="COG0224">
    <property type="taxonomic scope" value="Bacteria"/>
</dbReference>
<dbReference type="HOGENOM" id="CLU_050669_0_1_5"/>
<dbReference type="OrthoDB" id="9812769at2"/>
<dbReference type="Proteomes" id="UP000001951">
    <property type="component" value="Chromosome"/>
</dbReference>
<dbReference type="GO" id="GO:0005886">
    <property type="term" value="C:plasma membrane"/>
    <property type="evidence" value="ECO:0007669"/>
    <property type="project" value="UniProtKB-SubCell"/>
</dbReference>
<dbReference type="GO" id="GO:0045259">
    <property type="term" value="C:proton-transporting ATP synthase complex"/>
    <property type="evidence" value="ECO:0007669"/>
    <property type="project" value="UniProtKB-KW"/>
</dbReference>
<dbReference type="GO" id="GO:0005524">
    <property type="term" value="F:ATP binding"/>
    <property type="evidence" value="ECO:0007669"/>
    <property type="project" value="UniProtKB-UniRule"/>
</dbReference>
<dbReference type="GO" id="GO:0046933">
    <property type="term" value="F:proton-transporting ATP synthase activity, rotational mechanism"/>
    <property type="evidence" value="ECO:0007669"/>
    <property type="project" value="UniProtKB-UniRule"/>
</dbReference>
<dbReference type="GO" id="GO:0042777">
    <property type="term" value="P:proton motive force-driven plasma membrane ATP synthesis"/>
    <property type="evidence" value="ECO:0007669"/>
    <property type="project" value="UniProtKB-UniRule"/>
</dbReference>
<dbReference type="CDD" id="cd12151">
    <property type="entry name" value="F1-ATPase_gamma"/>
    <property type="match status" value="1"/>
</dbReference>
<dbReference type="Gene3D" id="3.40.1380.10">
    <property type="match status" value="1"/>
</dbReference>
<dbReference type="Gene3D" id="1.10.287.80">
    <property type="entry name" value="ATP synthase, gamma subunit, helix hairpin domain"/>
    <property type="match status" value="1"/>
</dbReference>
<dbReference type="HAMAP" id="MF_00815">
    <property type="entry name" value="ATP_synth_gamma_bact"/>
    <property type="match status" value="1"/>
</dbReference>
<dbReference type="InterPro" id="IPR035968">
    <property type="entry name" value="ATP_synth_F1_ATPase_gsu"/>
</dbReference>
<dbReference type="InterPro" id="IPR000131">
    <property type="entry name" value="ATP_synth_F1_gsu"/>
</dbReference>
<dbReference type="NCBIfam" id="TIGR01146">
    <property type="entry name" value="ATPsyn_F1gamma"/>
    <property type="match status" value="1"/>
</dbReference>
<dbReference type="PANTHER" id="PTHR11693">
    <property type="entry name" value="ATP SYNTHASE GAMMA CHAIN"/>
    <property type="match status" value="1"/>
</dbReference>
<dbReference type="PANTHER" id="PTHR11693:SF22">
    <property type="entry name" value="ATP SYNTHASE SUBUNIT GAMMA, MITOCHONDRIAL"/>
    <property type="match status" value="1"/>
</dbReference>
<dbReference type="Pfam" id="PF00231">
    <property type="entry name" value="ATP-synt"/>
    <property type="match status" value="1"/>
</dbReference>
<dbReference type="PRINTS" id="PR00126">
    <property type="entry name" value="ATPASEGAMMA"/>
</dbReference>
<dbReference type="SUPFAM" id="SSF52943">
    <property type="entry name" value="ATP synthase (F1-ATPase), gamma subunit"/>
    <property type="match status" value="1"/>
</dbReference>
<evidence type="ECO:0000255" key="1">
    <source>
        <dbReference type="HAMAP-Rule" id="MF_00815"/>
    </source>
</evidence>
<organism>
    <name type="scientific">Rickettsia bellii (strain RML369-C)</name>
    <dbReference type="NCBI Taxonomy" id="336407"/>
    <lineage>
        <taxon>Bacteria</taxon>
        <taxon>Pseudomonadati</taxon>
        <taxon>Pseudomonadota</taxon>
        <taxon>Alphaproteobacteria</taxon>
        <taxon>Rickettsiales</taxon>
        <taxon>Rickettsiaceae</taxon>
        <taxon>Rickettsieae</taxon>
        <taxon>Rickettsia</taxon>
        <taxon>belli group</taxon>
    </lineage>
</organism>